<keyword id="KW-1003">Cell membrane</keyword>
<keyword id="KW-0297">G-protein coupled receptor</keyword>
<keyword id="KW-0325">Glycoprotein</keyword>
<keyword id="KW-0472">Membrane</keyword>
<keyword id="KW-0675">Receptor</keyword>
<keyword id="KW-1185">Reference proteome</keyword>
<keyword id="KW-0807">Transducer</keyword>
<keyword id="KW-0812">Transmembrane</keyword>
<keyword id="KW-1133">Transmembrane helix</keyword>
<name>MRGX1_RAT</name>
<comment type="function">
    <text evidence="1">Orphan receptor activated by neuropeptides terminating in Arg-Phe or Arg-Phe-amide. Mediates its action by association with G proteins that activate a phosphatidylinositol-calcium second messenger system. Its effect is mediated by G(q) and G(11) proteins. May regulate the function of nociceptive neurons by modulation of pain perception (By similarity).</text>
</comment>
<comment type="subcellular location">
    <subcellularLocation>
        <location>Cell membrane</location>
        <topology>Multi-pass membrane protein</topology>
    </subcellularLocation>
</comment>
<comment type="tissue specificity">
    <text evidence="4 5">Uniquely localized in a subset of small dorsal root and trigeminal sensory neurons. Associated preferentially with IB4 class of small-diameter somatosensory afferents (also known as nociceptors).</text>
</comment>
<comment type="similarity">
    <text evidence="3">Belongs to the G-protein coupled receptor 1 family. Mas subfamily.</text>
</comment>
<comment type="sequence caution" evidence="6">
    <conflict type="erroneous initiation">
        <sequence resource="EMBL-CDS" id="AAL86877"/>
    </conflict>
</comment>
<proteinExistence type="evidence at transcript level"/>
<reference key="1">
    <citation type="journal article" date="2002" name="Nat. Neurosci.">
        <title>Proenkephalin A gene products activate a new family of sensory neuron-specific GPCRs.</title>
        <authorList>
            <person name="Lembo P.M.C."/>
            <person name="Grazzini E."/>
            <person name="Groblewski T."/>
            <person name="O'Donnell D."/>
            <person name="Roy M.-O."/>
            <person name="Zhang J."/>
            <person name="Hoffert C."/>
            <person name="Cao J."/>
            <person name="Schmidt R."/>
            <person name="Pelletier M."/>
            <person name="Labarre M."/>
            <person name="Gosselin M."/>
            <person name="Fortin Y."/>
            <person name="Banville D."/>
            <person name="Shen S."/>
            <person name="Stroem P."/>
            <person name="Payza K."/>
            <person name="Dray A."/>
            <person name="Walker P."/>
            <person name="Ahmad S."/>
        </authorList>
    </citation>
    <scope>NUCLEOTIDE SEQUENCE [GENOMIC DNA]</scope>
    <scope>TISSUE SPECIFICITY</scope>
    <source>
        <strain>Sprague-Dawley</strain>
    </source>
</reference>
<reference key="2">
    <citation type="journal article" date="2003" name="Proc. Natl. Acad. Sci. U.S.A.">
        <title>Atypical expansion in mice of the sensory neuron-specific Mrg G protein-coupled receptor family.</title>
        <authorList>
            <person name="Zylka M.J."/>
            <person name="Dong X."/>
            <person name="Southwell A.L."/>
            <person name="Anderson D.J."/>
        </authorList>
    </citation>
    <scope>NUCLEOTIDE SEQUENCE [GENOMIC DNA]</scope>
    <scope>TISSUE SPECIFICITY</scope>
    <source>
        <strain>Sprague-Dawley</strain>
    </source>
</reference>
<gene>
    <name type="primary">Mrgprx1</name>
    <name type="synonym">Mrgc</name>
    <name type="synonym">Mrgprc</name>
    <name type="synonym">Mrgprc11</name>
    <name type="synonym">Snsr</name>
    <name type="synonym">Snsr1</name>
</gene>
<sequence>MDPTISSLSTESTTLNKTGHPSCRPILTLSFLVPIITLLGLAGNTIVLWLLGFRMRRKAISVYVLNLSLADSFFLCCHFIDSLMRIMNFYGIYAHKLSKEILGNAAIIPYISGLSILSAISTERCLSVLWPIWYHCHRPRNMSAIICVLIWVLSFLMGILDWFFSGFLGETHHHLWKNVDFIVTAFLIFLFMLLFGSSLALLVRILCGSRRKPLSRLYVTISLTVMVYLICGLPLGLYLFLLYWFGIHLHYPFCHIYQVTVLLSCVNSSANPIIYFLVGSFRHRKKHRSLKMVLKRALEETPEEDEYTDSHVQKPTEISERRC</sequence>
<protein>
    <recommendedName>
        <fullName>Mas-related G-protein coupled receptor member X1</fullName>
    </recommendedName>
    <alternativeName>
        <fullName>Sensory neuron-specific G-protein coupled receptor 1</fullName>
    </alternativeName>
</protein>
<evidence type="ECO:0000250" key="1">
    <source>
        <dbReference type="UniProtKB" id="Q96LB2"/>
    </source>
</evidence>
<evidence type="ECO:0000255" key="2"/>
<evidence type="ECO:0000255" key="3">
    <source>
        <dbReference type="PROSITE-ProRule" id="PRU00521"/>
    </source>
</evidence>
<evidence type="ECO:0000269" key="4">
    <source>
    </source>
</evidence>
<evidence type="ECO:0000269" key="5">
    <source>
    </source>
</evidence>
<evidence type="ECO:0000305" key="6"/>
<feature type="chain" id="PRO_0000070109" description="Mas-related G-protein coupled receptor member X1">
    <location>
        <begin position="1"/>
        <end position="323"/>
    </location>
</feature>
<feature type="topological domain" description="Extracellular" evidence="2">
    <location>
        <begin position="1"/>
        <end position="30"/>
    </location>
</feature>
<feature type="transmembrane region" description="Helical; Name=1" evidence="2">
    <location>
        <begin position="31"/>
        <end position="51"/>
    </location>
</feature>
<feature type="topological domain" description="Cytoplasmic" evidence="2">
    <location>
        <begin position="52"/>
        <end position="59"/>
    </location>
</feature>
<feature type="transmembrane region" description="Helical; Name=2" evidence="2">
    <location>
        <begin position="60"/>
        <end position="80"/>
    </location>
</feature>
<feature type="topological domain" description="Extracellular" evidence="2">
    <location>
        <begin position="81"/>
        <end position="100"/>
    </location>
</feature>
<feature type="transmembrane region" description="Helical; Name=3" evidence="2">
    <location>
        <begin position="101"/>
        <end position="121"/>
    </location>
</feature>
<feature type="topological domain" description="Cytoplasmic" evidence="2">
    <location>
        <begin position="122"/>
        <end position="143"/>
    </location>
</feature>
<feature type="transmembrane region" description="Helical; Name=4" evidence="2">
    <location>
        <begin position="144"/>
        <end position="164"/>
    </location>
</feature>
<feature type="topological domain" description="Extracellular" evidence="2">
    <location>
        <begin position="165"/>
        <end position="180"/>
    </location>
</feature>
<feature type="transmembrane region" description="Helical; Name=5" evidence="2">
    <location>
        <begin position="181"/>
        <end position="201"/>
    </location>
</feature>
<feature type="topological domain" description="Cytoplasmic" evidence="2">
    <location>
        <begin position="202"/>
        <end position="226"/>
    </location>
</feature>
<feature type="transmembrane region" description="Helical; Name=6" evidence="2">
    <location>
        <begin position="227"/>
        <end position="247"/>
    </location>
</feature>
<feature type="topological domain" description="Extracellular" evidence="2">
    <location>
        <begin position="248"/>
        <end position="258"/>
    </location>
</feature>
<feature type="transmembrane region" description="Helical; Name=7" evidence="2">
    <location>
        <begin position="259"/>
        <end position="279"/>
    </location>
</feature>
<feature type="topological domain" description="Cytoplasmic" evidence="2">
    <location>
        <begin position="280"/>
        <end position="323"/>
    </location>
</feature>
<feature type="glycosylation site" description="N-linked (GlcNAc...) asparagine" evidence="2">
    <location>
        <position position="16"/>
    </location>
</feature>
<feature type="sequence conflict" description="In Ref. 2; AAQ08317." evidence="6" ref="2">
    <original>AAI</original>
    <variation>VAF</variation>
    <location>
        <begin position="105"/>
        <end position="107"/>
    </location>
</feature>
<dbReference type="EMBL" id="AF474986">
    <property type="protein sequence ID" value="AAL86877.2"/>
    <property type="status" value="ALT_INIT"/>
    <property type="molecule type" value="Genomic_DNA"/>
</dbReference>
<dbReference type="EMBL" id="AF518245">
    <property type="protein sequence ID" value="AAQ08317.1"/>
    <property type="molecule type" value="Genomic_DNA"/>
</dbReference>
<dbReference type="RefSeq" id="NP_001002286.1">
    <property type="nucleotide sequence ID" value="NM_001002286.1"/>
</dbReference>
<dbReference type="RefSeq" id="NP_750845.2">
    <property type="nucleotide sequence ID" value="NM_172158.2"/>
</dbReference>
<dbReference type="RefSeq" id="XP_017444332.1">
    <property type="nucleotide sequence ID" value="XM_017588843.1"/>
</dbReference>
<dbReference type="SMR" id="Q8R4G1"/>
<dbReference type="FunCoup" id="Q8R4G1">
    <property type="interactions" value="24"/>
</dbReference>
<dbReference type="STRING" id="10116.ENSRNOP00000019061"/>
<dbReference type="BindingDB" id="Q8R4G1"/>
<dbReference type="ChEMBL" id="CHEMBL3341575"/>
<dbReference type="GlyCosmos" id="Q8R4G1">
    <property type="glycosylation" value="1 site, No reported glycans"/>
</dbReference>
<dbReference type="GlyGen" id="Q8R4G1">
    <property type="glycosylation" value="1 site"/>
</dbReference>
<dbReference type="PaxDb" id="10116-ENSRNOP00000019061"/>
<dbReference type="GeneID" id="282547"/>
<dbReference type="KEGG" id="rno:282547"/>
<dbReference type="UCSC" id="RGD:632284">
    <property type="organism name" value="rat"/>
</dbReference>
<dbReference type="AGR" id="RGD:632284"/>
<dbReference type="CTD" id="259249"/>
<dbReference type="RGD" id="632284">
    <property type="gene designation" value="Mrgprx1"/>
</dbReference>
<dbReference type="eggNOG" id="ENOG502RTWA">
    <property type="taxonomic scope" value="Eukaryota"/>
</dbReference>
<dbReference type="InParanoid" id="Q8R4G1"/>
<dbReference type="OrthoDB" id="9631784at2759"/>
<dbReference type="PhylomeDB" id="Q8R4G1"/>
<dbReference type="TreeFam" id="TF336336"/>
<dbReference type="PRO" id="PR:Q8R4G1"/>
<dbReference type="Proteomes" id="UP000002494">
    <property type="component" value="Unplaced"/>
</dbReference>
<dbReference type="GO" id="GO:0005886">
    <property type="term" value="C:plasma membrane"/>
    <property type="evidence" value="ECO:0000318"/>
    <property type="project" value="GO_Central"/>
</dbReference>
<dbReference type="GO" id="GO:0004930">
    <property type="term" value="F:G protein-coupled receptor activity"/>
    <property type="evidence" value="ECO:0000318"/>
    <property type="project" value="GO_Central"/>
</dbReference>
<dbReference type="GO" id="GO:0007635">
    <property type="term" value="P:chemosensory behavior"/>
    <property type="evidence" value="ECO:0000266"/>
    <property type="project" value="RGD"/>
</dbReference>
<dbReference type="GO" id="GO:0007186">
    <property type="term" value="P:G protein-coupled receptor signaling pathway"/>
    <property type="evidence" value="ECO:0000318"/>
    <property type="project" value="GO_Central"/>
</dbReference>
<dbReference type="GO" id="GO:0002244">
    <property type="term" value="P:hematopoietic progenitor cell differentiation"/>
    <property type="evidence" value="ECO:0000266"/>
    <property type="project" value="RGD"/>
</dbReference>
<dbReference type="FunFam" id="1.20.1070.10:FF:000140">
    <property type="entry name" value="Mas-related G-protein coupled receptor member X2"/>
    <property type="match status" value="1"/>
</dbReference>
<dbReference type="Gene3D" id="1.20.1070.10">
    <property type="entry name" value="Rhodopsin 7-helix transmembrane proteins"/>
    <property type="match status" value="1"/>
</dbReference>
<dbReference type="InterPro" id="IPR000276">
    <property type="entry name" value="GPCR_Rhodpsn"/>
</dbReference>
<dbReference type="InterPro" id="IPR017452">
    <property type="entry name" value="GPCR_Rhodpsn_7TM"/>
</dbReference>
<dbReference type="InterPro" id="IPR026234">
    <property type="entry name" value="MRGPCRFAMILY"/>
</dbReference>
<dbReference type="PANTHER" id="PTHR11334">
    <property type="entry name" value="MAS-RELATED G-PROTEIN COUPLED RECEPTOR"/>
    <property type="match status" value="1"/>
</dbReference>
<dbReference type="PANTHER" id="PTHR11334:SF34">
    <property type="entry name" value="MAS-RELATED G-PROTEIN COUPLED RECEPTOR MEMBER X3"/>
    <property type="match status" value="1"/>
</dbReference>
<dbReference type="Pfam" id="PF00001">
    <property type="entry name" value="7tm_1"/>
    <property type="match status" value="1"/>
</dbReference>
<dbReference type="PRINTS" id="PR00237">
    <property type="entry name" value="GPCRRHODOPSN"/>
</dbReference>
<dbReference type="PRINTS" id="PR02108">
    <property type="entry name" value="MRGPCRFAMILY"/>
</dbReference>
<dbReference type="SUPFAM" id="SSF81321">
    <property type="entry name" value="Family A G protein-coupled receptor-like"/>
    <property type="match status" value="1"/>
</dbReference>
<dbReference type="PROSITE" id="PS00237">
    <property type="entry name" value="G_PROTEIN_RECEP_F1_1"/>
    <property type="match status" value="1"/>
</dbReference>
<dbReference type="PROSITE" id="PS50262">
    <property type="entry name" value="G_PROTEIN_RECEP_F1_2"/>
    <property type="match status" value="1"/>
</dbReference>
<accession>Q8R4G1</accession>
<accession>Q7TN42</accession>
<organism>
    <name type="scientific">Rattus norvegicus</name>
    <name type="common">Rat</name>
    <dbReference type="NCBI Taxonomy" id="10116"/>
    <lineage>
        <taxon>Eukaryota</taxon>
        <taxon>Metazoa</taxon>
        <taxon>Chordata</taxon>
        <taxon>Craniata</taxon>
        <taxon>Vertebrata</taxon>
        <taxon>Euteleostomi</taxon>
        <taxon>Mammalia</taxon>
        <taxon>Eutheria</taxon>
        <taxon>Euarchontoglires</taxon>
        <taxon>Glires</taxon>
        <taxon>Rodentia</taxon>
        <taxon>Myomorpha</taxon>
        <taxon>Muroidea</taxon>
        <taxon>Muridae</taxon>
        <taxon>Murinae</taxon>
        <taxon>Rattus</taxon>
    </lineage>
</organism>